<dbReference type="EC" id="2.7.1.26"/>
<dbReference type="EMBL" id="CP000502">
    <property type="protein sequence ID" value="ABN68689.2"/>
    <property type="molecule type" value="Genomic_DNA"/>
</dbReference>
<dbReference type="RefSeq" id="XP_001386718.2">
    <property type="nucleotide sequence ID" value="XM_001386681.1"/>
</dbReference>
<dbReference type="SMR" id="A3M0C9"/>
<dbReference type="FunCoup" id="A3M0C9">
    <property type="interactions" value="393"/>
</dbReference>
<dbReference type="STRING" id="322104.A3M0C9"/>
<dbReference type="GeneID" id="4841164"/>
<dbReference type="KEGG" id="pic:PICST_50354"/>
<dbReference type="eggNOG" id="KOG3110">
    <property type="taxonomic scope" value="Eukaryota"/>
</dbReference>
<dbReference type="HOGENOM" id="CLU_048437_3_2_1"/>
<dbReference type="InParanoid" id="A3M0C9"/>
<dbReference type="OMA" id="NGEVHKM"/>
<dbReference type="OrthoDB" id="276388at2759"/>
<dbReference type="UniPathway" id="UPA00276">
    <property type="reaction ID" value="UER00406"/>
</dbReference>
<dbReference type="Proteomes" id="UP000002258">
    <property type="component" value="Chromosome 8"/>
</dbReference>
<dbReference type="GO" id="GO:0005739">
    <property type="term" value="C:mitochondrion"/>
    <property type="evidence" value="ECO:0007669"/>
    <property type="project" value="TreeGrafter"/>
</dbReference>
<dbReference type="GO" id="GO:0005524">
    <property type="term" value="F:ATP binding"/>
    <property type="evidence" value="ECO:0007669"/>
    <property type="project" value="UniProtKB-KW"/>
</dbReference>
<dbReference type="GO" id="GO:0046872">
    <property type="term" value="F:metal ion binding"/>
    <property type="evidence" value="ECO:0007669"/>
    <property type="project" value="UniProtKB-KW"/>
</dbReference>
<dbReference type="GO" id="GO:0008531">
    <property type="term" value="F:riboflavin kinase activity"/>
    <property type="evidence" value="ECO:0007669"/>
    <property type="project" value="UniProtKB-EC"/>
</dbReference>
<dbReference type="GO" id="GO:0009398">
    <property type="term" value="P:FMN biosynthetic process"/>
    <property type="evidence" value="ECO:0007669"/>
    <property type="project" value="UniProtKB-UniPathway"/>
</dbReference>
<dbReference type="GO" id="GO:0009231">
    <property type="term" value="P:riboflavin biosynthetic process"/>
    <property type="evidence" value="ECO:0007669"/>
    <property type="project" value="InterPro"/>
</dbReference>
<dbReference type="Gene3D" id="2.40.30.30">
    <property type="entry name" value="Riboflavin kinase-like"/>
    <property type="match status" value="1"/>
</dbReference>
<dbReference type="InterPro" id="IPR023468">
    <property type="entry name" value="Riboflavin_kinase"/>
</dbReference>
<dbReference type="InterPro" id="IPR015865">
    <property type="entry name" value="Riboflavin_kinase_bac/euk"/>
</dbReference>
<dbReference type="InterPro" id="IPR023465">
    <property type="entry name" value="Riboflavin_kinase_dom_sf"/>
</dbReference>
<dbReference type="PANTHER" id="PTHR22749:SF6">
    <property type="entry name" value="RIBOFLAVIN KINASE"/>
    <property type="match status" value="1"/>
</dbReference>
<dbReference type="PANTHER" id="PTHR22749">
    <property type="entry name" value="RIBOFLAVIN KINASE/FMN ADENYLYLTRANSFERASE"/>
    <property type="match status" value="1"/>
</dbReference>
<dbReference type="Pfam" id="PF01687">
    <property type="entry name" value="Flavokinase"/>
    <property type="match status" value="1"/>
</dbReference>
<dbReference type="SMART" id="SM00904">
    <property type="entry name" value="Flavokinase"/>
    <property type="match status" value="1"/>
</dbReference>
<dbReference type="SUPFAM" id="SSF82114">
    <property type="entry name" value="Riboflavin kinase-like"/>
    <property type="match status" value="1"/>
</dbReference>
<organism>
    <name type="scientific">Scheffersomyces stipitis (strain ATCC 58785 / CBS 6054 / NBRC 10063 / NRRL Y-11545)</name>
    <name type="common">Yeast</name>
    <name type="synonym">Pichia stipitis</name>
    <dbReference type="NCBI Taxonomy" id="322104"/>
    <lineage>
        <taxon>Eukaryota</taxon>
        <taxon>Fungi</taxon>
        <taxon>Dikarya</taxon>
        <taxon>Ascomycota</taxon>
        <taxon>Saccharomycotina</taxon>
        <taxon>Pichiomycetes</taxon>
        <taxon>Debaryomycetaceae</taxon>
        <taxon>Scheffersomyces</taxon>
    </lineage>
</organism>
<feature type="chain" id="PRO_0000301849" description="Riboflavin kinase">
    <location>
        <begin position="1"/>
        <end position="178"/>
    </location>
</feature>
<feature type="active site" description="Nucleophile" evidence="1">
    <location>
        <position position="116"/>
    </location>
</feature>
<feature type="binding site" evidence="2">
    <location>
        <position position="39"/>
    </location>
    <ligand>
        <name>Mg(2+)</name>
        <dbReference type="ChEBI" id="CHEBI:18420"/>
    </ligand>
</feature>
<feature type="binding site" evidence="2">
    <location>
        <position position="41"/>
    </location>
    <ligand>
        <name>Mg(2+)</name>
        <dbReference type="ChEBI" id="CHEBI:18420"/>
    </ligand>
</feature>
<proteinExistence type="inferred from homology"/>
<evidence type="ECO:0000250" key="1"/>
<evidence type="ECO:0000250" key="2">
    <source>
        <dbReference type="UniProtKB" id="Q969G6"/>
    </source>
</evidence>
<evidence type="ECO:0000305" key="3"/>
<sequence>MARPDTVIPDKPESPYPIVQDSVVVSGFGRGSSELGIPTANIPINDDLNQLETGIYYGWCQLKPCTLPDECKTRTNGREVIYNHGKNLRNDDLKVLPMVMSIGWNPFYHLKEKAAEVHIMHKFDDFFYGAQIKFNVLGYIRPELDYTTKEALIEDINLDIKIALEALDRDAYQTYKDL</sequence>
<accession>A3M0C9</accession>
<comment type="function">
    <text evidence="1">Catalyzes the phosphorylation of riboflavin (vitamin B2) to form flavin mononucleotide (FMN) coenzyme.</text>
</comment>
<comment type="catalytic activity">
    <reaction>
        <text>riboflavin + ATP = FMN + ADP + H(+)</text>
        <dbReference type="Rhea" id="RHEA:14357"/>
        <dbReference type="ChEBI" id="CHEBI:15378"/>
        <dbReference type="ChEBI" id="CHEBI:30616"/>
        <dbReference type="ChEBI" id="CHEBI:57986"/>
        <dbReference type="ChEBI" id="CHEBI:58210"/>
        <dbReference type="ChEBI" id="CHEBI:456216"/>
        <dbReference type="EC" id="2.7.1.26"/>
    </reaction>
</comment>
<comment type="cofactor">
    <cofactor evidence="1">
        <name>Zn(2+)</name>
        <dbReference type="ChEBI" id="CHEBI:29105"/>
    </cofactor>
    <cofactor evidence="1">
        <name>Mg(2+)</name>
        <dbReference type="ChEBI" id="CHEBI:18420"/>
    </cofactor>
    <text evidence="1">Zinc or magnesium.</text>
</comment>
<comment type="pathway">
    <text>Cofactor biosynthesis; FMN biosynthesis; FMN from riboflavin (ATP route): step 1/1.</text>
</comment>
<comment type="similarity">
    <text evidence="3">Belongs to the flavokinase family.</text>
</comment>
<name>RIFK_PICST</name>
<gene>
    <name type="primary">FMN1</name>
    <name type="ORF">PICST_50354</name>
</gene>
<protein>
    <recommendedName>
        <fullName>Riboflavin kinase</fullName>
        <ecNumber>2.7.1.26</ecNumber>
    </recommendedName>
    <alternativeName>
        <fullName>Flavin mononucleotide kinase 1</fullName>
    </alternativeName>
</protein>
<reference key="1">
    <citation type="journal article" date="2007" name="Nat. Biotechnol.">
        <title>Genome sequence of the lignocellulose-bioconverting and xylose-fermenting yeast Pichia stipitis.</title>
        <authorList>
            <person name="Jeffries T.W."/>
            <person name="Grigoriev I.V."/>
            <person name="Grimwood J."/>
            <person name="Laplaza J.M."/>
            <person name="Aerts A."/>
            <person name="Salamov A."/>
            <person name="Schmutz J."/>
            <person name="Lindquist E."/>
            <person name="Dehal P."/>
            <person name="Shapiro H."/>
            <person name="Jin Y.-S."/>
            <person name="Passoth V."/>
            <person name="Richardson P.M."/>
        </authorList>
    </citation>
    <scope>NUCLEOTIDE SEQUENCE [LARGE SCALE GENOMIC DNA]</scope>
    <source>
        <strain>ATCC 58785 / CBS 6054 / NBRC 10063 / NRRL Y-11545</strain>
    </source>
</reference>
<keyword id="KW-0067">ATP-binding</keyword>
<keyword id="KW-0285">Flavoprotein</keyword>
<keyword id="KW-0288">FMN</keyword>
<keyword id="KW-0418">Kinase</keyword>
<keyword id="KW-0460">Magnesium</keyword>
<keyword id="KW-0479">Metal-binding</keyword>
<keyword id="KW-0547">Nucleotide-binding</keyword>
<keyword id="KW-1185">Reference proteome</keyword>
<keyword id="KW-0808">Transferase</keyword>
<keyword id="KW-0862">Zinc</keyword>